<feature type="chain" id="PRO_0000130981" description="Small ribosomal subunit protein uS14c">
    <location>
        <begin position="1"/>
        <end position="103"/>
    </location>
</feature>
<protein>
    <recommendedName>
        <fullName evidence="1">Small ribosomal subunit protein uS14c</fullName>
    </recommendedName>
    <alternativeName>
        <fullName evidence="2">30S ribosomal protein S14, chloroplastic</fullName>
    </alternativeName>
</protein>
<reference key="1">
    <citation type="journal article" date="2004" name="Plant Physiol.">
        <title>A comparison of rice chloroplast genomes.</title>
        <authorList>
            <person name="Tang J."/>
            <person name="Xia H."/>
            <person name="Cao M."/>
            <person name="Zhang X."/>
            <person name="Zeng W."/>
            <person name="Hu S."/>
            <person name="Tong W."/>
            <person name="Wang J."/>
            <person name="Wang J."/>
            <person name="Yu J."/>
            <person name="Yang H."/>
            <person name="Zhu L."/>
        </authorList>
    </citation>
    <scope>NUCLEOTIDE SEQUENCE [LARGE SCALE GENOMIC DNA]</scope>
    <source>
        <strain>cv. PA64s</strain>
    </source>
</reference>
<gene>
    <name evidence="1" type="primary">rps14</name>
    <name type="ORF">PA048</name>
</gene>
<evidence type="ECO:0000255" key="1">
    <source>
        <dbReference type="HAMAP-Rule" id="MF_00537"/>
    </source>
</evidence>
<evidence type="ECO:0000305" key="2"/>
<accession>P0C465</accession>
<accession>P09096</accession>
<accession>Q6QY76</accession>
<accession>Q7G7B6</accession>
<dbReference type="EMBL" id="AY522331">
    <property type="protein sequence ID" value="AAS46182.1"/>
    <property type="molecule type" value="Genomic_DNA"/>
</dbReference>
<dbReference type="RefSeq" id="NP_039381.1">
    <property type="nucleotide sequence ID" value="NC_001320.1"/>
</dbReference>
<dbReference type="RefSeq" id="YP_009305302.1">
    <property type="nucleotide sequence ID" value="NC_031333.1"/>
</dbReference>
<dbReference type="SMR" id="P0C465"/>
<dbReference type="GeneID" id="29141361"/>
<dbReference type="GeneID" id="3131436"/>
<dbReference type="KEGG" id="osa:3131436"/>
<dbReference type="GO" id="GO:0009507">
    <property type="term" value="C:chloroplast"/>
    <property type="evidence" value="ECO:0007669"/>
    <property type="project" value="UniProtKB-SubCell"/>
</dbReference>
<dbReference type="GO" id="GO:0009536">
    <property type="term" value="C:plastid"/>
    <property type="evidence" value="ECO:0000305"/>
    <property type="project" value="Gramene"/>
</dbReference>
<dbReference type="GO" id="GO:0015935">
    <property type="term" value="C:small ribosomal subunit"/>
    <property type="evidence" value="ECO:0007669"/>
    <property type="project" value="TreeGrafter"/>
</dbReference>
<dbReference type="GO" id="GO:0019843">
    <property type="term" value="F:rRNA binding"/>
    <property type="evidence" value="ECO:0007669"/>
    <property type="project" value="UniProtKB-UniRule"/>
</dbReference>
<dbReference type="GO" id="GO:0003735">
    <property type="term" value="F:structural constituent of ribosome"/>
    <property type="evidence" value="ECO:0007669"/>
    <property type="project" value="InterPro"/>
</dbReference>
<dbReference type="GO" id="GO:0006412">
    <property type="term" value="P:translation"/>
    <property type="evidence" value="ECO:0007669"/>
    <property type="project" value="UniProtKB-UniRule"/>
</dbReference>
<dbReference type="FunFam" id="1.10.287.1480:FF:000001">
    <property type="entry name" value="30S ribosomal protein S14"/>
    <property type="match status" value="1"/>
</dbReference>
<dbReference type="Gene3D" id="1.10.287.1480">
    <property type="match status" value="1"/>
</dbReference>
<dbReference type="HAMAP" id="MF_00537">
    <property type="entry name" value="Ribosomal_uS14_1"/>
    <property type="match status" value="1"/>
</dbReference>
<dbReference type="InterPro" id="IPR001209">
    <property type="entry name" value="Ribosomal_uS14"/>
</dbReference>
<dbReference type="InterPro" id="IPR023036">
    <property type="entry name" value="Ribosomal_uS14_bac/plastid"/>
</dbReference>
<dbReference type="InterPro" id="IPR018271">
    <property type="entry name" value="Ribosomal_uS14_CS"/>
</dbReference>
<dbReference type="NCBIfam" id="NF006477">
    <property type="entry name" value="PRK08881.1"/>
    <property type="match status" value="1"/>
</dbReference>
<dbReference type="PANTHER" id="PTHR19836">
    <property type="entry name" value="30S RIBOSOMAL PROTEIN S14"/>
    <property type="match status" value="1"/>
</dbReference>
<dbReference type="PANTHER" id="PTHR19836:SF19">
    <property type="entry name" value="SMALL RIBOSOMAL SUBUNIT PROTEIN US14M"/>
    <property type="match status" value="1"/>
</dbReference>
<dbReference type="Pfam" id="PF00253">
    <property type="entry name" value="Ribosomal_S14"/>
    <property type="match status" value="1"/>
</dbReference>
<dbReference type="SUPFAM" id="SSF57716">
    <property type="entry name" value="Glucocorticoid receptor-like (DNA-binding domain)"/>
    <property type="match status" value="1"/>
</dbReference>
<dbReference type="PROSITE" id="PS00527">
    <property type="entry name" value="RIBOSOMAL_S14"/>
    <property type="match status" value="1"/>
</dbReference>
<organism>
    <name type="scientific">Oryza sativa</name>
    <name type="common">Rice</name>
    <dbReference type="NCBI Taxonomy" id="4530"/>
    <lineage>
        <taxon>Eukaryota</taxon>
        <taxon>Viridiplantae</taxon>
        <taxon>Streptophyta</taxon>
        <taxon>Embryophyta</taxon>
        <taxon>Tracheophyta</taxon>
        <taxon>Spermatophyta</taxon>
        <taxon>Magnoliopsida</taxon>
        <taxon>Liliopsida</taxon>
        <taxon>Poales</taxon>
        <taxon>Poaceae</taxon>
        <taxon>BOP clade</taxon>
        <taxon>Oryzoideae</taxon>
        <taxon>Oryzeae</taxon>
        <taxon>Oryzinae</taxon>
        <taxon>Oryza</taxon>
    </lineage>
</organism>
<proteinExistence type="inferred from homology"/>
<sequence length="103" mass="12254">MAKKSLIQRERKRQKLEQKYHLIRRSSKKKIRSKVYPLSLSEKTKMREKLQSLPRNSAPTRLHRRCFLTGRPRANYRDFGLSGHILREMVYACLLPGATRSSW</sequence>
<keyword id="KW-0150">Chloroplast</keyword>
<keyword id="KW-0934">Plastid</keyword>
<keyword id="KW-0687">Ribonucleoprotein</keyword>
<keyword id="KW-0689">Ribosomal protein</keyword>
<keyword id="KW-0694">RNA-binding</keyword>
<keyword id="KW-0699">rRNA-binding</keyword>
<name>RR14_ORYSA</name>
<comment type="function">
    <text evidence="1">Binds 16S rRNA, required for the assembly of 30S particles.</text>
</comment>
<comment type="subunit">
    <text evidence="1">Part of the 30S ribosomal subunit.</text>
</comment>
<comment type="subcellular location">
    <subcellularLocation>
        <location>Plastid</location>
        <location>Chloroplast</location>
    </subcellularLocation>
</comment>
<comment type="similarity">
    <text evidence="1">Belongs to the universal ribosomal protein uS14 family.</text>
</comment>
<geneLocation type="chloroplast"/>